<protein>
    <recommendedName>
        <fullName evidence="12">Protein-lysine myristoyltransferase HlyC</fullName>
        <ecNumber evidence="6 9">2.3.1.-</ecNumber>
    </recommendedName>
    <alternativeName>
        <fullName>Hemolysin C</fullName>
    </alternativeName>
    <alternativeName>
        <fullName>Hemolysin-activating lysine-acyltransferase HlyC</fullName>
    </alternativeName>
    <alternativeName>
        <fullName>Toxin-activating protein C, PHLY152</fullName>
    </alternativeName>
</protein>
<reference key="1">
    <citation type="journal article" date="1986" name="FEMS Microbiol. Lett.">
        <title>Nucleotide sequence of a plasmid-encoded hemolysin determinant and its comparison with a corresponding chromosomal hemolysin sequence.</title>
        <authorList>
            <person name="Hess J."/>
            <person name="Wels W."/>
            <person name="Vogel M."/>
            <person name="Goebel W."/>
        </authorList>
    </citation>
    <scope>NUCLEOTIDE SEQUENCE [GENOMIC DNA]</scope>
</reference>
<reference key="2">
    <citation type="journal article" date="1984" name="Mol. Gen. Genet.">
        <title>Expression and regulation of the plasmid-encoded hemolysin determinant of Escherichia coli.</title>
        <authorList>
            <person name="Juarez A."/>
            <person name="Hughes C."/>
            <person name="Vogel M."/>
            <person name="Goebel W."/>
        </authorList>
    </citation>
    <scope>NUCLEOTIDE SEQUENCE [GENOMIC DNA]</scope>
</reference>
<reference key="3">
    <citation type="journal article" date="1985" name="Basic Life Sci.">
        <title>Structure, function, and regulation of the plasmid-encoded hemolysin determinant of Escherichia coli.</title>
        <authorList>
            <person name="Goebel W."/>
            <person name="Hacker J."/>
            <person name="Knapp S."/>
            <person name="Then I."/>
            <person name="Wagner W."/>
            <person name="Hughes C."/>
            <person name="Juarez A."/>
        </authorList>
    </citation>
    <scope>NUCLEOTIDE SEQUENCE [GENOMIC DNA]</scope>
</reference>
<reference key="4">
    <citation type="journal article" date="1998" name="Biochemistry">
        <title>The biochemistry of hemolysin toxin activation: characterization of HlyC, an internal protein acyltransferase.</title>
        <authorList>
            <person name="Trent M.S."/>
            <person name="Worsham L.M."/>
            <person name="Ernst-Fonberg M.L."/>
        </authorList>
    </citation>
    <scope>FUNCTION</scope>
    <scope>SUBUNIT</scope>
</reference>
<reference key="5">
    <citation type="journal article" date="1999" name="Biochemistry">
        <title>HlyC, the internal protein acyltransferase that activates hemolysin toxin: role of conserved histidine, serine, and cysteine residues in enzymatic activity as probed by chemical modification and site-directed mutagenesis.</title>
        <authorList>
            <person name="Trent M.S."/>
            <person name="Worsham L.M."/>
            <person name="Ernst-Fonberg M.L."/>
        </authorList>
    </citation>
    <scope>FUNCTION</scope>
    <scope>ACTIVE SITE</scope>
    <scope>MUTAGENESIS OF SER-20; HIS-23; CYS-57; SER-58 AND SER-76</scope>
</reference>
<reference key="6">
    <citation type="journal article" date="1999" name="Biochemistry">
        <title>HlyC, the internal protein acyltransferase that activates hemolysin toxin: the role of conserved tyrosine and arginine residues in enzymatic activity as probed by chemical modification and site-directed mutagenesis.</title>
        <authorList>
            <person name="Trent M.S."/>
            <person name="Worsham L.M."/>
            <person name="Ernst-Fonberg M.L."/>
        </authorList>
    </citation>
    <scope>MUTAGENESIS OF ARG-24; TYR-70; ARG-87 AND TYR-150</scope>
</reference>
<reference key="7">
    <citation type="journal article" date="1999" name="Biochemistry">
        <title>HlyC, the internal protein acyltransferase that activates hemolysin toxin: roles of various conserved residues in enzymatic activity as probed by site-directed mutagenesis.</title>
        <authorList>
            <person name="Trent M.S."/>
            <person name="Worsham L.M."/>
            <person name="Ernst-Fonberg M.L."/>
        </authorList>
    </citation>
    <scope>FUNCTION</scope>
    <scope>MUTAGENESIS OF GLY-11; PRO-53; GLY-85; ASP-86 AND PRO-96</scope>
</reference>
<reference key="8">
    <citation type="journal article" date="2001" name="Biochemistry">
        <title>Insights into the catalytic mechanism of HlyC, the internal protein acyltransferase that activates Escherichia coli hemolysin toxin.</title>
        <authorList>
            <person name="Worsham L.M."/>
            <person name="Trent M.S."/>
            <person name="Earls L."/>
            <person name="Jolly C."/>
            <person name="Ernst-Fonberg M.L."/>
        </authorList>
    </citation>
    <scope>FUNCTION</scope>
    <scope>CATALYTIC ACTIVITY</scope>
    <scope>MUTAGENESIS OF 19-SER-SER-20; SER-20; HIS-23; GLN-43 AND CYS-57</scope>
</reference>
<reference key="9">
    <citation type="journal article" date="2001" name="J. Biol. Chem.">
        <title>In vivo proteolytic degradation of the Escherichia coli acyltransferase HlyC.</title>
        <authorList>
            <person name="Guzman-Verri C."/>
            <person name="Chaves-Olarte E."/>
            <person name="Garcia F."/>
            <person name="Arvidson S."/>
            <person name="Moreno E."/>
        </authorList>
    </citation>
    <scope>FUNCTION</scope>
    <scope>DEGRADATION</scope>
    <scope>MUTAGENESIS OF 128-GLY--VAL-130; 128-GLY-LYS-129; GLY-128 AND LYS-129</scope>
</reference>
<reference key="10">
    <citation type="journal article" date="2004" name="Biochemistry">
        <title>Activation of hemolysin toxin: relationship between two internal protein sites of acylation.</title>
        <authorList>
            <person name="Langston K.G."/>
            <person name="Worsham L.M."/>
            <person name="Earls L."/>
            <person name="Ernst-Fonberg M.L."/>
        </authorList>
    </citation>
    <scope>FUNCTION</scope>
</reference>
<reference key="11">
    <citation type="journal article" date="2018" name="Biochim. Biophys. Acta">
        <title>Insights into mechanism and functional consequences of heme binding to hemolysin-activating lysine acyltransferase HlyC from Escherichia coli.</title>
        <authorList>
            <person name="Peherstorfer S."/>
            <person name="Brewitz H.H."/>
            <person name="Paul George A.A."/>
            <person name="Wissbrock A."/>
            <person name="Adam J.M."/>
            <person name="Schmitt L."/>
            <person name="Imhof D."/>
        </authorList>
    </citation>
    <scope>FUNCTION</scope>
    <scope>ACTIVITY REGULATION</scope>
    <scope>HEME-BINDING</scope>
    <scope>MUTAGENESIS OF 151-HIS-HIS-152</scope>
</reference>
<reference key="12">
    <citation type="journal article" date="2020" name="J. Biol. Chem.">
        <title>Acyltransferase-mediated selection of the length of the fatty acyl chain and of the acylation site governs activation of bacterial RTX toxins.</title>
        <authorList>
            <person name="Osickova A."/>
            <person name="Khaliq H."/>
            <person name="Masin J."/>
            <person name="Jurnecka D."/>
            <person name="Sukova A."/>
            <person name="Fiser R."/>
            <person name="Holubova J."/>
            <person name="Stanek O."/>
            <person name="Sebo P."/>
            <person name="Osicka R."/>
        </authorList>
    </citation>
    <scope>FUNCTION</scope>
    <scope>CATALYTIC ACTIVITY</scope>
</reference>
<accession>P06736</accession>
<keyword id="KW-0012">Acyltransferase</keyword>
<keyword id="KW-0204">Cytolysis</keyword>
<keyword id="KW-0963">Cytoplasm</keyword>
<keyword id="KW-0349">Heme</keyword>
<keyword id="KW-0354">Hemolysis</keyword>
<keyword id="KW-0408">Iron</keyword>
<keyword id="KW-0479">Metal-binding</keyword>
<keyword id="KW-0614">Plasmid</keyword>
<keyword id="KW-0808">Transferase</keyword>
<keyword id="KW-0843">Virulence</keyword>
<feature type="chain" id="PRO_0000217875" description="Protein-lysine myristoyltransferase HlyC">
    <location>
        <begin position="1"/>
        <end position="170"/>
    </location>
</feature>
<feature type="active site" evidence="13">
    <location>
        <position position="23"/>
    </location>
</feature>
<feature type="active site" evidence="1">
    <location>
        <position position="92"/>
    </location>
</feature>
<feature type="binding site" evidence="14">
    <location>
        <position position="151"/>
    </location>
    <ligand>
        <name>heme</name>
        <dbReference type="ChEBI" id="CHEBI:30413"/>
    </ligand>
</feature>
<feature type="mutagenesis site" description="Strongly decreased acyltransferase activity." evidence="4">
    <original>G</original>
    <variation>A</variation>
    <location>
        <position position="11"/>
    </location>
</feature>
<feature type="mutagenesis site" description="Significant loss of acyltransferase activity." evidence="6">
    <original>SS</original>
    <variation>AA</variation>
    <location>
        <begin position="19"/>
        <end position="20"/>
    </location>
</feature>
<feature type="mutagenesis site" description="Significant loss of acyltransferase activity." evidence="2 6">
    <original>S</original>
    <variation>A</variation>
    <variation>C</variation>
    <variation>T</variation>
    <variation>H</variation>
    <location>
        <position position="20"/>
    </location>
</feature>
<feature type="mutagenesis site" description="Complete loss of acyltransferase activity." evidence="2 6">
    <original>H</original>
    <variation>A</variation>
    <variation>C</variation>
    <variation>S</variation>
    <variation>D</variation>
    <variation>K</variation>
    <variation>Y</variation>
    <location>
        <position position="23"/>
    </location>
</feature>
<feature type="mutagenesis site" description="Little effect." evidence="3">
    <original>R</original>
    <variation>A</variation>
    <variation>K</variation>
    <location>
        <position position="24"/>
    </location>
</feature>
<feature type="mutagenesis site" description="Decreased acyltransferase activity." evidence="6">
    <original>Q</original>
    <variation>A</variation>
    <location>
        <position position="43"/>
    </location>
</feature>
<feature type="mutagenesis site" description="Strongly decreased acyltransferase activity." evidence="4">
    <original>P</original>
    <variation>A</variation>
    <location>
        <position position="53"/>
    </location>
</feature>
<feature type="mutagenesis site" description="Does not affect acyltransferase activity." evidence="2 6">
    <original>C</original>
    <variation>A</variation>
    <location>
        <position position="57"/>
    </location>
</feature>
<feature type="mutagenesis site" description="Little effect." evidence="2">
    <original>S</original>
    <variation>A</variation>
    <location>
        <position position="58"/>
    </location>
</feature>
<feature type="mutagenesis site" description="No effect." evidence="3">
    <original>Y</original>
    <variation>F</variation>
    <location>
        <position position="70"/>
    </location>
</feature>
<feature type="mutagenesis site" description="Strongly decreased acyltransferase activity." evidence="3">
    <original>Y</original>
    <variation>G</variation>
    <location>
        <position position="70"/>
    </location>
</feature>
<feature type="mutagenesis site" description="Slightly decreased acyltransferase activity." evidence="2">
    <original>S</original>
    <variation>A</variation>
    <location>
        <position position="76"/>
    </location>
</feature>
<feature type="mutagenesis site" description="Abolished acyltransferase activity." evidence="4">
    <original>G</original>
    <variation>A</variation>
    <location>
        <position position="85"/>
    </location>
</feature>
<feature type="mutagenesis site" description="Decreased acyltransferase activity." evidence="4">
    <original>D</original>
    <variation>A</variation>
    <location>
        <position position="86"/>
    </location>
</feature>
<feature type="mutagenesis site" description="Little effect." evidence="3">
    <original>R</original>
    <variation>A</variation>
    <variation>K</variation>
    <location>
        <position position="87"/>
    </location>
</feature>
<feature type="mutagenesis site" description="Strongly decreased acyltransferase activity." evidence="4">
    <original>P</original>
    <variation>A</variation>
    <location>
        <position position="96"/>
    </location>
</feature>
<feature type="mutagenesis site" description="Abolished ability to activate HlyA. Does not affect protein stability." evidence="5">
    <location>
        <begin position="128"/>
        <end position="130"/>
    </location>
</feature>
<feature type="mutagenesis site" description="Abolished ability to activate HlyA. Does not affect protein stability." evidence="5">
    <original>GK</original>
    <variation>VI</variation>
    <location>
        <begin position="128"/>
        <end position="129"/>
    </location>
</feature>
<feature type="mutagenesis site" description="Abolished ability to activate HlyA. Does not affect protein stability." evidence="5">
    <original>G</original>
    <variation>V</variation>
    <location>
        <position position="128"/>
    </location>
</feature>
<feature type="mutagenesis site" description="Reduced ability to activate HlyA." evidence="5">
    <original>K</original>
    <variation>I</variation>
    <location>
        <position position="129"/>
    </location>
</feature>
<feature type="mutagenesis site" description="No effect." evidence="3">
    <original>Y</original>
    <variation>F</variation>
    <location>
        <position position="150"/>
    </location>
</feature>
<feature type="mutagenesis site" description="Great loss of activity." evidence="3">
    <original>Y</original>
    <variation>G</variation>
    <location>
        <position position="150"/>
    </location>
</feature>
<feature type="mutagenesis site" description="Abolished heme-binding." evidence="8">
    <original>HH</original>
    <variation>AA</variation>
    <location>
        <begin position="151"/>
        <end position="152"/>
    </location>
</feature>
<dbReference type="EC" id="2.3.1.-" evidence="6 9"/>
<dbReference type="EMBL" id="M14107">
    <property type="protein sequence ID" value="AAA98232.1"/>
    <property type="molecule type" value="Genomic_DNA"/>
</dbReference>
<dbReference type="EMBL" id="X01072">
    <property type="protein sequence ID" value="CAA25535.1"/>
    <property type="molecule type" value="Genomic_DNA"/>
</dbReference>
<dbReference type="EMBL" id="M35668">
    <property type="protein sequence ID" value="AAA23980.1"/>
    <property type="molecule type" value="Genomic_DNA"/>
</dbReference>
<dbReference type="PIR" id="I41288">
    <property type="entry name" value="I41288"/>
</dbReference>
<dbReference type="RefSeq" id="WP_001372478.1">
    <property type="nucleotide sequence ID" value="NZ_WVUR01000116.1"/>
</dbReference>
<dbReference type="SMR" id="P06736"/>
<dbReference type="GO" id="GO:0005737">
    <property type="term" value="C:cytoplasm"/>
    <property type="evidence" value="ECO:0007669"/>
    <property type="project" value="UniProtKB-SubCell"/>
</dbReference>
<dbReference type="GO" id="GO:0140769">
    <property type="term" value="F:ACP-dependent peptidyl-lysine N6-myristoyltransferase activity"/>
    <property type="evidence" value="ECO:0007669"/>
    <property type="project" value="RHEA"/>
</dbReference>
<dbReference type="GO" id="GO:0020037">
    <property type="term" value="F:heme binding"/>
    <property type="evidence" value="ECO:0000314"/>
    <property type="project" value="UniProtKB"/>
</dbReference>
<dbReference type="GO" id="GO:0046872">
    <property type="term" value="F:metal ion binding"/>
    <property type="evidence" value="ECO:0007669"/>
    <property type="project" value="UniProtKB-KW"/>
</dbReference>
<dbReference type="GO" id="GO:0018030">
    <property type="term" value="F:peptidyl-lysine N6-myristoyltransferase activity"/>
    <property type="evidence" value="ECO:0000314"/>
    <property type="project" value="UniProtKB"/>
</dbReference>
<dbReference type="GO" id="GO:0031640">
    <property type="term" value="P:killing of cells of another organism"/>
    <property type="evidence" value="ECO:0007669"/>
    <property type="project" value="UniProtKB-KW"/>
</dbReference>
<dbReference type="GO" id="GO:0009404">
    <property type="term" value="P:toxin metabolic process"/>
    <property type="evidence" value="ECO:0007669"/>
    <property type="project" value="InterPro"/>
</dbReference>
<dbReference type="InterPro" id="IPR003996">
    <property type="entry name" value="RTX_toxin-activating_protC_bac"/>
</dbReference>
<dbReference type="Pfam" id="PF02794">
    <property type="entry name" value="HlyC"/>
    <property type="match status" value="1"/>
</dbReference>
<dbReference type="PRINTS" id="PR01489">
    <property type="entry name" value="RTXTOXINC"/>
</dbReference>
<sequence>MNINKPLEILGHVSWLWASSPLHRNWPVSLFAINVLPAIQANQYVLLTRDDYPVAYCSWANLSLENEIKYLNDVTSLVAEDWTSGDRKWFIDWIAPFGDNGALYKYMRKKFPDELFRAIRVDPKTHVGKVSEFHGGKIDKQLANKIFKQYHHELITEVKRKSDFNFSLTG</sequence>
<organism>
    <name type="scientific">Escherichia coli</name>
    <dbReference type="NCBI Taxonomy" id="562"/>
    <lineage>
        <taxon>Bacteria</taxon>
        <taxon>Pseudomonadati</taxon>
        <taxon>Pseudomonadota</taxon>
        <taxon>Gammaproteobacteria</taxon>
        <taxon>Enterobacterales</taxon>
        <taxon>Enterobacteriaceae</taxon>
        <taxon>Escherichia</taxon>
    </lineage>
</organism>
<geneLocation type="plasmid">
    <name>IncI2 pHLY152</name>
</geneLocation>
<comment type="function">
    <text evidence="2 4 5 6 7 8 9 10">Protein-lysine myristoyltransferase that catalyzes myristoylation of the protoxin (HlyA) at two internal lysine residues, thereby converting it to the active toxin.</text>
</comment>
<comment type="catalytic activity">
    <reaction evidence="6 9">
        <text>tetradecanoyl-[ACP] + L-lysyl-[protein] = N(6)-tetradecanoyl-L-lysyl-[protein] + holo-[ACP] + H(+)</text>
        <dbReference type="Rhea" id="RHEA:70611"/>
        <dbReference type="Rhea" id="RHEA-COMP:9648"/>
        <dbReference type="Rhea" id="RHEA-COMP:9685"/>
        <dbReference type="Rhea" id="RHEA-COMP:9752"/>
        <dbReference type="Rhea" id="RHEA-COMP:15437"/>
        <dbReference type="ChEBI" id="CHEBI:15378"/>
        <dbReference type="ChEBI" id="CHEBI:29969"/>
        <dbReference type="ChEBI" id="CHEBI:64479"/>
        <dbReference type="ChEBI" id="CHEBI:78477"/>
        <dbReference type="ChEBI" id="CHEBI:141129"/>
    </reaction>
    <physiologicalReaction direction="left-to-right" evidence="6 9">
        <dbReference type="Rhea" id="RHEA:70612"/>
    </physiologicalReaction>
</comment>
<comment type="activity regulation">
    <text evidence="8">The acyltransferase activity is inhibited by heme.</text>
</comment>
<comment type="biophysicochemical properties">
    <kinetics>
        <KM evidence="6">1.6 uM for tetradecanoyl-CoA</KM>
        <KM evidence="6">3.6 uM for HlyA peptide</KM>
        <Vmax evidence="6">4667.0 pmol/min/mg enzyme</Vmax>
    </kinetics>
</comment>
<comment type="subunit">
    <text evidence="10">Monomer.</text>
</comment>
<comment type="subcellular location">
    <subcellularLocation>
        <location evidence="12">Cytoplasm</location>
    </subcellularLocation>
</comment>
<comment type="PTM">
    <text evidence="5">Proteolytically cleaved by the protease systems ClpAP, ClpXP and FtsH, leading to its degradation.</text>
</comment>
<comment type="similarity">
    <text evidence="12">Belongs to the RTX toxin acyltransferase family.</text>
</comment>
<proteinExistence type="evidence at protein level"/>
<evidence type="ECO:0000250" key="1">
    <source>
        <dbReference type="UniProtKB" id="P55132"/>
    </source>
</evidence>
<evidence type="ECO:0000269" key="2">
    <source>
    </source>
</evidence>
<evidence type="ECO:0000269" key="3">
    <source>
    </source>
</evidence>
<evidence type="ECO:0000269" key="4">
    <source>
    </source>
</evidence>
<evidence type="ECO:0000269" key="5">
    <source>
    </source>
</evidence>
<evidence type="ECO:0000269" key="6">
    <source>
    </source>
</evidence>
<evidence type="ECO:0000269" key="7">
    <source>
    </source>
</evidence>
<evidence type="ECO:0000269" key="8">
    <source>
    </source>
</evidence>
<evidence type="ECO:0000269" key="9">
    <source>
    </source>
</evidence>
<evidence type="ECO:0000269" key="10">
    <source>
    </source>
</evidence>
<evidence type="ECO:0000303" key="11">
    <source>
    </source>
</evidence>
<evidence type="ECO:0000305" key="12"/>
<evidence type="ECO:0000305" key="13">
    <source>
    </source>
</evidence>
<evidence type="ECO:0000305" key="14">
    <source>
    </source>
</evidence>
<gene>
    <name evidence="11" type="primary">hlyC</name>
</gene>
<name>HLYC_ECOLX</name>